<reference key="1">
    <citation type="journal article" date="2008" name="PLoS ONE">
        <title>Genome sequence of a lancefield group C Streptococcus zooepidemicus strain causing epidemic nephritis: new information about an old disease.</title>
        <authorList>
            <person name="Beres S.B."/>
            <person name="Sesso R."/>
            <person name="Pinto S.W.L."/>
            <person name="Hoe N.P."/>
            <person name="Porcella S.F."/>
            <person name="Deleo F.R."/>
            <person name="Musser J.M."/>
        </authorList>
    </citation>
    <scope>NUCLEOTIDE SEQUENCE [LARGE SCALE GENOMIC DNA]</scope>
    <source>
        <strain>MGCS10565</strain>
    </source>
</reference>
<organism>
    <name type="scientific">Streptococcus equi subsp. zooepidemicus (strain MGCS10565)</name>
    <dbReference type="NCBI Taxonomy" id="552526"/>
    <lineage>
        <taxon>Bacteria</taxon>
        <taxon>Bacillati</taxon>
        <taxon>Bacillota</taxon>
        <taxon>Bacilli</taxon>
        <taxon>Lactobacillales</taxon>
        <taxon>Streptococcaceae</taxon>
        <taxon>Streptococcus</taxon>
    </lineage>
</organism>
<dbReference type="EC" id="3.2.1.85" evidence="1"/>
<dbReference type="EMBL" id="CP001129">
    <property type="protein sequence ID" value="ACG61833.1"/>
    <property type="molecule type" value="Genomic_DNA"/>
</dbReference>
<dbReference type="RefSeq" id="WP_012515109.1">
    <property type="nucleotide sequence ID" value="NC_011134.1"/>
</dbReference>
<dbReference type="SMR" id="B4U1G6"/>
<dbReference type="CAZy" id="GH1">
    <property type="family name" value="Glycoside Hydrolase Family 1"/>
</dbReference>
<dbReference type="KEGG" id="sez:Sez_0461"/>
<dbReference type="HOGENOM" id="CLU_001859_1_3_9"/>
<dbReference type="UniPathway" id="UPA00542">
    <property type="reaction ID" value="UER00605"/>
</dbReference>
<dbReference type="Proteomes" id="UP000001873">
    <property type="component" value="Chromosome"/>
</dbReference>
<dbReference type="GO" id="GO:0005829">
    <property type="term" value="C:cytosol"/>
    <property type="evidence" value="ECO:0007669"/>
    <property type="project" value="TreeGrafter"/>
</dbReference>
<dbReference type="GO" id="GO:0033920">
    <property type="term" value="F:6-phospho-beta-galactosidase activity"/>
    <property type="evidence" value="ECO:0007669"/>
    <property type="project" value="UniProtKB-UniRule"/>
</dbReference>
<dbReference type="GO" id="GO:0008422">
    <property type="term" value="F:beta-glucosidase activity"/>
    <property type="evidence" value="ECO:0007669"/>
    <property type="project" value="TreeGrafter"/>
</dbReference>
<dbReference type="GO" id="GO:0019512">
    <property type="term" value="P:lactose catabolic process via tagatose-6-phosphate"/>
    <property type="evidence" value="ECO:0007669"/>
    <property type="project" value="InterPro"/>
</dbReference>
<dbReference type="FunFam" id="3.20.20.80:FF:000004">
    <property type="entry name" value="Beta-glucosidase 6-phospho-beta-glucosidase"/>
    <property type="match status" value="1"/>
</dbReference>
<dbReference type="Gene3D" id="3.20.20.80">
    <property type="entry name" value="Glycosidases"/>
    <property type="match status" value="1"/>
</dbReference>
<dbReference type="HAMAP" id="MF_01574">
    <property type="entry name" value="LacG"/>
    <property type="match status" value="1"/>
</dbReference>
<dbReference type="InterPro" id="IPR005928">
    <property type="entry name" value="6P-beta-galactosidase"/>
</dbReference>
<dbReference type="InterPro" id="IPR001360">
    <property type="entry name" value="Glyco_hydro_1"/>
</dbReference>
<dbReference type="InterPro" id="IPR018120">
    <property type="entry name" value="Glyco_hydro_1_AS"/>
</dbReference>
<dbReference type="InterPro" id="IPR033132">
    <property type="entry name" value="Glyco_hydro_1_N_CS"/>
</dbReference>
<dbReference type="InterPro" id="IPR017853">
    <property type="entry name" value="Glycoside_hydrolase_SF"/>
</dbReference>
<dbReference type="NCBIfam" id="TIGR01233">
    <property type="entry name" value="lacG"/>
    <property type="match status" value="1"/>
</dbReference>
<dbReference type="NCBIfam" id="NF010036">
    <property type="entry name" value="PRK13511.1"/>
    <property type="match status" value="1"/>
</dbReference>
<dbReference type="PANTHER" id="PTHR10353">
    <property type="entry name" value="GLYCOSYL HYDROLASE"/>
    <property type="match status" value="1"/>
</dbReference>
<dbReference type="PANTHER" id="PTHR10353:SF36">
    <property type="entry name" value="LP05116P"/>
    <property type="match status" value="1"/>
</dbReference>
<dbReference type="Pfam" id="PF00232">
    <property type="entry name" value="Glyco_hydro_1"/>
    <property type="match status" value="1"/>
</dbReference>
<dbReference type="PRINTS" id="PR00131">
    <property type="entry name" value="GLHYDRLASE1"/>
</dbReference>
<dbReference type="SUPFAM" id="SSF51445">
    <property type="entry name" value="(Trans)glycosidases"/>
    <property type="match status" value="1"/>
</dbReference>
<dbReference type="PROSITE" id="PS00572">
    <property type="entry name" value="GLYCOSYL_HYDROL_F1_1"/>
    <property type="match status" value="1"/>
</dbReference>
<dbReference type="PROSITE" id="PS00653">
    <property type="entry name" value="GLYCOSYL_HYDROL_F1_2"/>
    <property type="match status" value="1"/>
</dbReference>
<name>LACG_STREM</name>
<proteinExistence type="inferred from homology"/>
<accession>B4U1G6</accession>
<protein>
    <recommendedName>
        <fullName evidence="1">6-phospho-beta-galactosidase</fullName>
        <ecNumber evidence="1">3.2.1.85</ecNumber>
    </recommendedName>
    <alternativeName>
        <fullName evidence="1">Beta-D-phosphogalactoside galactohydrolase</fullName>
        <shortName evidence="1">PGALase</shortName>
    </alternativeName>
    <alternativeName>
        <fullName evidence="1">P-beta-Gal</fullName>
        <shortName evidence="1">PBG</shortName>
    </alternativeName>
</protein>
<feature type="chain" id="PRO_1000147419" description="6-phospho-beta-galactosidase">
    <location>
        <begin position="1"/>
        <end position="469"/>
    </location>
</feature>
<feature type="active site" description="Proton donor" evidence="1">
    <location>
        <position position="160"/>
    </location>
</feature>
<feature type="active site" description="Nucleophile" evidence="1">
    <location>
        <position position="375"/>
    </location>
</feature>
<feature type="binding site" evidence="1">
    <location>
        <position position="19"/>
    </location>
    <ligand>
        <name>D-galactose 6-phosphate</name>
        <dbReference type="ChEBI" id="CHEBI:91004"/>
    </ligand>
</feature>
<feature type="binding site" evidence="1">
    <location>
        <position position="116"/>
    </location>
    <ligand>
        <name>D-galactose 6-phosphate</name>
        <dbReference type="ChEBI" id="CHEBI:91004"/>
    </ligand>
</feature>
<feature type="binding site" evidence="1">
    <location>
        <position position="159"/>
    </location>
    <ligand>
        <name>D-galactose 6-phosphate</name>
        <dbReference type="ChEBI" id="CHEBI:91004"/>
    </ligand>
</feature>
<feature type="binding site" evidence="1">
    <location>
        <position position="160"/>
    </location>
    <ligand>
        <name>D-galactose 6-phosphate</name>
        <dbReference type="ChEBI" id="CHEBI:91004"/>
    </ligand>
</feature>
<feature type="binding site" evidence="1">
    <location>
        <position position="297"/>
    </location>
    <ligand>
        <name>D-galactose 6-phosphate</name>
        <dbReference type="ChEBI" id="CHEBI:91004"/>
    </ligand>
</feature>
<feature type="binding site" evidence="1">
    <location>
        <position position="428"/>
    </location>
    <ligand>
        <name>D-galactose 6-phosphate</name>
        <dbReference type="ChEBI" id="CHEBI:91004"/>
    </ligand>
</feature>
<feature type="binding site" evidence="1">
    <location>
        <position position="429"/>
    </location>
    <ligand>
        <name>D-galactose 6-phosphate</name>
        <dbReference type="ChEBI" id="CHEBI:91004"/>
    </ligand>
</feature>
<feature type="binding site" evidence="1">
    <location>
        <position position="435"/>
    </location>
    <ligand>
        <name>D-galactose 6-phosphate</name>
        <dbReference type="ChEBI" id="CHEBI:91004"/>
    </ligand>
</feature>
<feature type="binding site" evidence="1">
    <location>
        <position position="437"/>
    </location>
    <ligand>
        <name>D-galactose 6-phosphate</name>
        <dbReference type="ChEBI" id="CHEBI:91004"/>
    </ligand>
</feature>
<keyword id="KW-0326">Glycosidase</keyword>
<keyword id="KW-0378">Hydrolase</keyword>
<comment type="catalytic activity">
    <reaction evidence="1">
        <text>a 6-phospho-beta-D-galactoside + H2O = D-galactose 6-phosphate + an alcohol</text>
        <dbReference type="Rhea" id="RHEA:24568"/>
        <dbReference type="ChEBI" id="CHEBI:15377"/>
        <dbReference type="ChEBI" id="CHEBI:30879"/>
        <dbReference type="ChEBI" id="CHEBI:58534"/>
        <dbReference type="ChEBI" id="CHEBI:91004"/>
        <dbReference type="EC" id="3.2.1.85"/>
    </reaction>
</comment>
<comment type="pathway">
    <text evidence="1">Carbohydrate metabolism; lactose degradation; D-galactose 6-phosphate and beta-D-glucose from lactose 6-phosphate: step 1/1.</text>
</comment>
<comment type="similarity">
    <text evidence="1">Belongs to the glycosyl hydrolase 1 family.</text>
</comment>
<gene>
    <name evidence="1" type="primary">lacG</name>
    <name type="ordered locus">Sez_0461</name>
</gene>
<evidence type="ECO:0000255" key="1">
    <source>
        <dbReference type="HAMAP-Rule" id="MF_01574"/>
    </source>
</evidence>
<sequence length="469" mass="53462">MIKRLPDDFIFGGATAAYQAEGATTIDGKGAVAWDRYLKDNYWYTAEPASDFYHQYPIDLALAEQFGINGIRISIAWSRIFPEGFGEVNAKGVAFYHSLFAECHKHHVEPFVTLHHFDTPEALHSRGDFLNRENIDHFVAYAAYCFKEFPEVSYWTTFNEIGPIGDGQYLVGKFPPGISYDLAKVFQSHHNMMLAHARALVHYKEQAYPGEIGIVHALPTKYPLDPTNPADVLAAELDDIIHNKFILDATYLGQYSEKTMAGVKHILAENGGSLDLRPEDFELLQAAKDLNDFLGINYYMSDWLRAFDGETEIIHNGKGEKGGSKYQIKGVGQRIFDVDVPRTDWDWMIYPQGLYDQIMRIKADYPGYKKIYITENGLGYKDTCIDGRIDDDARIDYIKQHLAVIADVISAGANVKGYFIWSLMDVFSWSNGYDKRYGLFYVDFETQKRYPKKSAYWYQQLAATKTISV</sequence>